<evidence type="ECO:0000255" key="1">
    <source>
        <dbReference type="HAMAP-Rule" id="MF_00209"/>
    </source>
</evidence>
<organism>
    <name type="scientific">Corynebacterium glutamicum (strain ATCC 13032 / DSM 20300 / JCM 1318 / BCRC 11384 / CCUG 27702 / LMG 3730 / NBRC 12168 / NCIMB 10025 / NRRL B-2784 / 534)</name>
    <dbReference type="NCBI Taxonomy" id="196627"/>
    <lineage>
        <taxon>Bacteria</taxon>
        <taxon>Bacillati</taxon>
        <taxon>Actinomycetota</taxon>
        <taxon>Actinomycetes</taxon>
        <taxon>Mycobacteriales</taxon>
        <taxon>Corynebacteriaceae</taxon>
        <taxon>Corynebacterium</taxon>
    </lineage>
</organism>
<comment type="function">
    <text evidence="1">Catalyzes the hydrolysis of inorganic pyrophosphate (PPi) forming two phosphate ions.</text>
</comment>
<comment type="catalytic activity">
    <reaction evidence="1">
        <text>diphosphate + H2O = 2 phosphate + H(+)</text>
        <dbReference type="Rhea" id="RHEA:24576"/>
        <dbReference type="ChEBI" id="CHEBI:15377"/>
        <dbReference type="ChEBI" id="CHEBI:15378"/>
        <dbReference type="ChEBI" id="CHEBI:33019"/>
        <dbReference type="ChEBI" id="CHEBI:43474"/>
        <dbReference type="EC" id="3.6.1.1"/>
    </reaction>
</comment>
<comment type="cofactor">
    <cofactor evidence="1">
        <name>Mg(2+)</name>
        <dbReference type="ChEBI" id="CHEBI:18420"/>
    </cofactor>
</comment>
<comment type="subunit">
    <text evidence="1">Homohexamer.</text>
</comment>
<comment type="subcellular location">
    <subcellularLocation>
        <location evidence="1">Cytoplasm</location>
    </subcellularLocation>
</comment>
<comment type="similarity">
    <text evidence="1">Belongs to the PPase family.</text>
</comment>
<gene>
    <name evidence="1" type="primary">ppa</name>
    <name type="ordered locus">Cgl2700</name>
    <name type="ordered locus">cg2988</name>
</gene>
<feature type="chain" id="PRO_0000137494" description="Inorganic pyrophosphatase">
    <location>
        <begin position="1"/>
        <end position="158"/>
    </location>
</feature>
<feature type="active site" description="Proton acceptor" evidence="1">
    <location>
        <position position="89"/>
    </location>
</feature>
<feature type="binding site" evidence="1">
    <location>
        <position position="8"/>
    </location>
    <ligand>
        <name>Mg(2+)</name>
        <dbReference type="ChEBI" id="CHEBI:18420"/>
        <label>2</label>
    </ligand>
</feature>
<feature type="binding site" evidence="1">
    <location>
        <position position="16"/>
    </location>
    <ligand>
        <name>substrate</name>
    </ligand>
</feature>
<feature type="binding site" evidence="1">
    <location>
        <position position="30"/>
    </location>
    <ligand>
        <name>substrate</name>
    </ligand>
</feature>
<feature type="binding site" evidence="1">
    <location>
        <position position="42"/>
    </location>
    <ligand>
        <name>substrate</name>
    </ligand>
</feature>
<feature type="binding site" evidence="1">
    <location>
        <position position="52"/>
    </location>
    <ligand>
        <name>Mg(2+)</name>
        <dbReference type="ChEBI" id="CHEBI:18420"/>
        <label>1</label>
    </ligand>
</feature>
<feature type="binding site" evidence="1">
    <location>
        <position position="57"/>
    </location>
    <ligand>
        <name>Mg(2+)</name>
        <dbReference type="ChEBI" id="CHEBI:18420"/>
        <label>1</label>
    </ligand>
</feature>
<feature type="binding site" evidence="1">
    <location>
        <position position="57"/>
    </location>
    <ligand>
        <name>Mg(2+)</name>
        <dbReference type="ChEBI" id="CHEBI:18420"/>
        <label>2</label>
    </ligand>
</feature>
<feature type="binding site" evidence="1">
    <location>
        <position position="84"/>
    </location>
    <ligand>
        <name>Mg(2+)</name>
        <dbReference type="ChEBI" id="CHEBI:18420"/>
        <label>3</label>
    </ligand>
</feature>
<feature type="binding site" evidence="1">
    <location>
        <position position="89"/>
    </location>
    <ligand>
        <name>Mg(2+)</name>
        <dbReference type="ChEBI" id="CHEBI:18420"/>
        <label>1</label>
    </ligand>
</feature>
<feature type="binding site" evidence="1">
    <location>
        <position position="89"/>
    </location>
    <ligand>
        <name>Mg(2+)</name>
        <dbReference type="ChEBI" id="CHEBI:18420"/>
        <label>3</label>
    </ligand>
</feature>
<feature type="binding site" evidence="1">
    <location>
        <position position="125"/>
    </location>
    <ligand>
        <name>substrate</name>
    </ligand>
</feature>
<accession>Q8NM79</accession>
<reference key="1">
    <citation type="journal article" date="2003" name="Appl. Microbiol. Biotechnol.">
        <title>The Corynebacterium glutamicum genome: features and impacts on biotechnological processes.</title>
        <authorList>
            <person name="Ikeda M."/>
            <person name="Nakagawa S."/>
        </authorList>
    </citation>
    <scope>NUCLEOTIDE SEQUENCE [LARGE SCALE GENOMIC DNA]</scope>
    <source>
        <strain>ATCC 13032 / DSM 20300 / JCM 1318 / BCRC 11384 / CCUG 27702 / LMG 3730 / NBRC 12168 / NCIMB 10025 / NRRL B-2784 / 534</strain>
    </source>
</reference>
<reference key="2">
    <citation type="journal article" date="2003" name="J. Biotechnol.">
        <title>The complete Corynebacterium glutamicum ATCC 13032 genome sequence and its impact on the production of L-aspartate-derived amino acids and vitamins.</title>
        <authorList>
            <person name="Kalinowski J."/>
            <person name="Bathe B."/>
            <person name="Bartels D."/>
            <person name="Bischoff N."/>
            <person name="Bott M."/>
            <person name="Burkovski A."/>
            <person name="Dusch N."/>
            <person name="Eggeling L."/>
            <person name="Eikmanns B.J."/>
            <person name="Gaigalat L."/>
            <person name="Goesmann A."/>
            <person name="Hartmann M."/>
            <person name="Huthmacher K."/>
            <person name="Kraemer R."/>
            <person name="Linke B."/>
            <person name="McHardy A.C."/>
            <person name="Meyer F."/>
            <person name="Moeckel B."/>
            <person name="Pfefferle W."/>
            <person name="Puehler A."/>
            <person name="Rey D.A."/>
            <person name="Rueckert C."/>
            <person name="Rupp O."/>
            <person name="Sahm H."/>
            <person name="Wendisch V.F."/>
            <person name="Wiegraebe I."/>
            <person name="Tauch A."/>
        </authorList>
    </citation>
    <scope>NUCLEOTIDE SEQUENCE [LARGE SCALE GENOMIC DNA]</scope>
    <source>
        <strain>ATCC 13032 / DSM 20300 / JCM 1318 / BCRC 11384 / CCUG 27702 / LMG 3730 / NBRC 12168 / NCIMB 10025 / NRRL B-2784 / 534</strain>
    </source>
</reference>
<dbReference type="EC" id="3.6.1.1" evidence="1"/>
<dbReference type="EMBL" id="BA000036">
    <property type="protein sequence ID" value="BAC00094.1"/>
    <property type="molecule type" value="Genomic_DNA"/>
</dbReference>
<dbReference type="EMBL" id="BX927156">
    <property type="protein sequence ID" value="CAF20723.1"/>
    <property type="molecule type" value="Genomic_DNA"/>
</dbReference>
<dbReference type="RefSeq" id="NP_601896.1">
    <property type="nucleotide sequence ID" value="NC_003450.3"/>
</dbReference>
<dbReference type="RefSeq" id="WP_011015320.1">
    <property type="nucleotide sequence ID" value="NC_006958.1"/>
</dbReference>
<dbReference type="SMR" id="Q8NM79"/>
<dbReference type="STRING" id="196627.cg2988"/>
<dbReference type="KEGG" id="cgb:cg2988"/>
<dbReference type="KEGG" id="cgl:Cgl2700"/>
<dbReference type="PATRIC" id="fig|196627.13.peg.2632"/>
<dbReference type="eggNOG" id="COG0221">
    <property type="taxonomic scope" value="Bacteria"/>
</dbReference>
<dbReference type="HOGENOM" id="CLU_073198_1_1_11"/>
<dbReference type="OrthoDB" id="5187599at2"/>
<dbReference type="BioCyc" id="CORYNE:G18NG-12317-MONOMER"/>
<dbReference type="Proteomes" id="UP000000582">
    <property type="component" value="Chromosome"/>
</dbReference>
<dbReference type="Proteomes" id="UP000001009">
    <property type="component" value="Chromosome"/>
</dbReference>
<dbReference type="GO" id="GO:0005737">
    <property type="term" value="C:cytoplasm"/>
    <property type="evidence" value="ECO:0007669"/>
    <property type="project" value="UniProtKB-SubCell"/>
</dbReference>
<dbReference type="GO" id="GO:0004427">
    <property type="term" value="F:inorganic diphosphate phosphatase activity"/>
    <property type="evidence" value="ECO:0007669"/>
    <property type="project" value="UniProtKB-UniRule"/>
</dbReference>
<dbReference type="GO" id="GO:0000287">
    <property type="term" value="F:magnesium ion binding"/>
    <property type="evidence" value="ECO:0007669"/>
    <property type="project" value="UniProtKB-UniRule"/>
</dbReference>
<dbReference type="GO" id="GO:0006796">
    <property type="term" value="P:phosphate-containing compound metabolic process"/>
    <property type="evidence" value="ECO:0007669"/>
    <property type="project" value="InterPro"/>
</dbReference>
<dbReference type="CDD" id="cd00412">
    <property type="entry name" value="pyrophosphatase"/>
    <property type="match status" value="1"/>
</dbReference>
<dbReference type="FunFam" id="3.90.80.10:FF:000003">
    <property type="entry name" value="Inorganic pyrophosphatase"/>
    <property type="match status" value="1"/>
</dbReference>
<dbReference type="Gene3D" id="3.90.80.10">
    <property type="entry name" value="Inorganic pyrophosphatase"/>
    <property type="match status" value="1"/>
</dbReference>
<dbReference type="HAMAP" id="MF_00209">
    <property type="entry name" value="Inorganic_PPase"/>
    <property type="match status" value="1"/>
</dbReference>
<dbReference type="InterPro" id="IPR008162">
    <property type="entry name" value="Pyrophosphatase"/>
</dbReference>
<dbReference type="InterPro" id="IPR036649">
    <property type="entry name" value="Pyrophosphatase_sf"/>
</dbReference>
<dbReference type="PANTHER" id="PTHR10286">
    <property type="entry name" value="INORGANIC PYROPHOSPHATASE"/>
    <property type="match status" value="1"/>
</dbReference>
<dbReference type="Pfam" id="PF00719">
    <property type="entry name" value="Pyrophosphatase"/>
    <property type="match status" value="1"/>
</dbReference>
<dbReference type="SUPFAM" id="SSF50324">
    <property type="entry name" value="Inorganic pyrophosphatase"/>
    <property type="match status" value="1"/>
</dbReference>
<dbReference type="PROSITE" id="PS00387">
    <property type="entry name" value="PPASE"/>
    <property type="match status" value="1"/>
</dbReference>
<proteinExistence type="inferred from homology"/>
<keyword id="KW-0963">Cytoplasm</keyword>
<keyword id="KW-0378">Hydrolase</keyword>
<keyword id="KW-0460">Magnesium</keyword>
<keyword id="KW-0479">Metal-binding</keyword>
<keyword id="KW-1185">Reference proteome</keyword>
<name>IPYR_CORGL</name>
<sequence length="158" mass="17905">MSIEVTVEIPKGSRNKYEIDHETGKVYLDRYLFTPMAYPLDYGYIDHTLGEDGDPLDALVILPESVFPAVVVKSRIIGVFKMTDEAGGDDKLLSVLDDPRYDHIQDISDVSDFLKDEIEHFFVHYKDLEKGKHVDGSGWGDKAEAEKIHAEAIDRYKA</sequence>
<protein>
    <recommendedName>
        <fullName evidence="1">Inorganic pyrophosphatase</fullName>
        <ecNumber evidence="1">3.6.1.1</ecNumber>
    </recommendedName>
    <alternativeName>
        <fullName evidence="1">Pyrophosphate phospho-hydrolase</fullName>
        <shortName evidence="1">PPase</shortName>
    </alternativeName>
</protein>